<comment type="function">
    <text evidence="2">A cytochrome P450 monooxygenase involved in corticoid and androgen biosynthesis. Catalyzes 17-alpha hydroxylation of C21 steroids, which is common for both pathways. A second oxidative step, required only for androgen synthesis, involves an acyl-carbon cleavage. The 17-alpha hydroxy intermediates, as part of adrenal glucocorticoids biosynthesis pathway, are precursors of cortisol. Hydroxylates steroid hormones, pregnenolone and progesterone to form 17-alpha hydroxy metabolites, followed by the cleavage of the C17-C20 bond to form C19 steroids, dehydroepiandrosterone (DHEA) and androstenedione. Has 16-alpha hydroxylase activity. Catalyzes 16-alpha hydroxylation of 17-alpha hydroxy pregnenolone, followed by the cleavage of the C17-C20 bond to form 16-alpha-hydroxy DHEA. Also 16-alpha hydroxylates androgens, relevant for estriol synthesis. Mechanistically, uses molecular oxygen inserting one oxygen atom into a substrate, and reducing the second into a water molecule, with two electrons provided by NADPH via cytochrome P450 reductase (CPR; NADPH-ferrihemoprotein reductase).</text>
</comment>
<comment type="catalytic activity">
    <reaction evidence="2">
        <text>a C21-steroid + reduced [NADPH--hemoprotein reductase] + O2 = a 17alpha-hydroxy-C21-steroid + oxidized [NADPH--hemoprotein reductase] + H2O + H(+)</text>
        <dbReference type="Rhea" id="RHEA:65760"/>
        <dbReference type="Rhea" id="RHEA-COMP:11964"/>
        <dbReference type="Rhea" id="RHEA-COMP:11965"/>
        <dbReference type="ChEBI" id="CHEBI:15377"/>
        <dbReference type="ChEBI" id="CHEBI:15378"/>
        <dbReference type="ChEBI" id="CHEBI:15379"/>
        <dbReference type="ChEBI" id="CHEBI:57618"/>
        <dbReference type="ChEBI" id="CHEBI:58210"/>
        <dbReference type="ChEBI" id="CHEBI:61313"/>
        <dbReference type="ChEBI" id="CHEBI:138141"/>
        <dbReference type="EC" id="1.14.14.19"/>
    </reaction>
    <physiologicalReaction direction="left-to-right" evidence="2">
        <dbReference type="Rhea" id="RHEA:65761"/>
    </physiologicalReaction>
</comment>
<comment type="catalytic activity">
    <reaction evidence="2">
        <text>progesterone + reduced [NADPH--hemoprotein reductase] + O2 = 17alpha-hydroxyprogesterone + oxidized [NADPH--hemoprotein reductase] + H2O + H(+)</text>
        <dbReference type="Rhea" id="RHEA:46308"/>
        <dbReference type="Rhea" id="RHEA-COMP:11964"/>
        <dbReference type="Rhea" id="RHEA-COMP:11965"/>
        <dbReference type="ChEBI" id="CHEBI:15377"/>
        <dbReference type="ChEBI" id="CHEBI:15378"/>
        <dbReference type="ChEBI" id="CHEBI:15379"/>
        <dbReference type="ChEBI" id="CHEBI:17026"/>
        <dbReference type="ChEBI" id="CHEBI:17252"/>
        <dbReference type="ChEBI" id="CHEBI:57618"/>
        <dbReference type="ChEBI" id="CHEBI:58210"/>
        <dbReference type="EC" id="1.14.14.19"/>
    </reaction>
    <physiologicalReaction direction="left-to-right" evidence="2">
        <dbReference type="Rhea" id="RHEA:46309"/>
    </physiologicalReaction>
</comment>
<comment type="catalytic activity">
    <reaction evidence="2">
        <text>pregnenolone + reduced [NADPH--hemoprotein reductase] + O2 = 17alpha-hydroxypregnenolone + oxidized [NADPH--hemoprotein reductase] + H2O + H(+)</text>
        <dbReference type="Rhea" id="RHEA:50236"/>
        <dbReference type="Rhea" id="RHEA-COMP:11964"/>
        <dbReference type="Rhea" id="RHEA-COMP:11965"/>
        <dbReference type="ChEBI" id="CHEBI:15377"/>
        <dbReference type="ChEBI" id="CHEBI:15378"/>
        <dbReference type="ChEBI" id="CHEBI:15379"/>
        <dbReference type="ChEBI" id="CHEBI:16581"/>
        <dbReference type="ChEBI" id="CHEBI:28750"/>
        <dbReference type="ChEBI" id="CHEBI:57618"/>
        <dbReference type="ChEBI" id="CHEBI:58210"/>
        <dbReference type="EC" id="1.14.14.19"/>
    </reaction>
    <physiologicalReaction direction="left-to-right" evidence="2">
        <dbReference type="Rhea" id="RHEA:50237"/>
    </physiologicalReaction>
</comment>
<comment type="catalytic activity">
    <reaction evidence="2">
        <text>17alpha-hydroxyprogesterone + reduced [NADPH--hemoprotein reductase] + O2 = androst-4-ene-3,17-dione + acetate + oxidized [NADPH--hemoprotein reductase] + H2O + 2 H(+)</text>
        <dbReference type="Rhea" id="RHEA:14753"/>
        <dbReference type="Rhea" id="RHEA-COMP:11964"/>
        <dbReference type="Rhea" id="RHEA-COMP:11965"/>
        <dbReference type="ChEBI" id="CHEBI:15377"/>
        <dbReference type="ChEBI" id="CHEBI:15378"/>
        <dbReference type="ChEBI" id="CHEBI:15379"/>
        <dbReference type="ChEBI" id="CHEBI:16422"/>
        <dbReference type="ChEBI" id="CHEBI:17252"/>
        <dbReference type="ChEBI" id="CHEBI:30089"/>
        <dbReference type="ChEBI" id="CHEBI:57618"/>
        <dbReference type="ChEBI" id="CHEBI:58210"/>
        <dbReference type="EC" id="1.14.14.32"/>
    </reaction>
    <physiologicalReaction direction="left-to-right" evidence="2">
        <dbReference type="Rhea" id="RHEA:14754"/>
    </physiologicalReaction>
</comment>
<comment type="catalytic activity">
    <reaction evidence="2">
        <text>17alpha-hydroxyprogesterone + reduced [NADPH--hemoprotein reductase] + O2 = 16alpha,17alpha-dihydroxyprogesterone + oxidized [NADPH--hemoprotein reductase] + H2O + H(+)</text>
        <dbReference type="Rhea" id="RHEA:53216"/>
        <dbReference type="Rhea" id="RHEA-COMP:11964"/>
        <dbReference type="Rhea" id="RHEA-COMP:11965"/>
        <dbReference type="ChEBI" id="CHEBI:763"/>
        <dbReference type="ChEBI" id="CHEBI:15377"/>
        <dbReference type="ChEBI" id="CHEBI:15378"/>
        <dbReference type="ChEBI" id="CHEBI:15379"/>
        <dbReference type="ChEBI" id="CHEBI:17252"/>
        <dbReference type="ChEBI" id="CHEBI:57618"/>
        <dbReference type="ChEBI" id="CHEBI:58210"/>
    </reaction>
    <physiologicalReaction direction="left-to-right" evidence="2">
        <dbReference type="Rhea" id="RHEA:53217"/>
    </physiologicalReaction>
</comment>
<comment type="catalytic activity">
    <reaction evidence="2">
        <text>16alpha,17alpha-dihydroxyprogesterone + reduced [NADPH--hemoprotein reductase] + O2 = 6beta,16alpha,17alpha-trihydroxyprogesterone + oxidized [NADPH--hemoprotein reductase] + H2O + H(+)</text>
        <dbReference type="Rhea" id="RHEA:53220"/>
        <dbReference type="Rhea" id="RHEA-COMP:11964"/>
        <dbReference type="Rhea" id="RHEA-COMP:11965"/>
        <dbReference type="ChEBI" id="CHEBI:763"/>
        <dbReference type="ChEBI" id="CHEBI:15377"/>
        <dbReference type="ChEBI" id="CHEBI:15378"/>
        <dbReference type="ChEBI" id="CHEBI:15379"/>
        <dbReference type="ChEBI" id="CHEBI:57618"/>
        <dbReference type="ChEBI" id="CHEBI:58210"/>
        <dbReference type="ChEBI" id="CHEBI:137046"/>
    </reaction>
    <physiologicalReaction direction="left-to-right" evidence="2">
        <dbReference type="Rhea" id="RHEA:53221"/>
    </physiologicalReaction>
</comment>
<comment type="catalytic activity">
    <reaction evidence="2">
        <text>17alpha-hydroxypregnenolone + reduced [NADPH--hemoprotein reductase] + O2 = 3beta-hydroxyandrost-5-en-17-one + acetate + oxidized [NADPH--hemoprotein reductase] + H2O + 2 H(+)</text>
        <dbReference type="Rhea" id="RHEA:50244"/>
        <dbReference type="Rhea" id="RHEA-COMP:11964"/>
        <dbReference type="Rhea" id="RHEA-COMP:11965"/>
        <dbReference type="ChEBI" id="CHEBI:15377"/>
        <dbReference type="ChEBI" id="CHEBI:15378"/>
        <dbReference type="ChEBI" id="CHEBI:15379"/>
        <dbReference type="ChEBI" id="CHEBI:28689"/>
        <dbReference type="ChEBI" id="CHEBI:28750"/>
        <dbReference type="ChEBI" id="CHEBI:30089"/>
        <dbReference type="ChEBI" id="CHEBI:57618"/>
        <dbReference type="ChEBI" id="CHEBI:58210"/>
        <dbReference type="EC" id="1.14.14.32"/>
    </reaction>
    <physiologicalReaction direction="left-to-right" evidence="2">
        <dbReference type="Rhea" id="RHEA:50245"/>
    </physiologicalReaction>
</comment>
<comment type="catalytic activity">
    <reaction evidence="2">
        <text>16alpha,17alpha-dihydroxypregnenolone + reduced [NADPH--hemoprotein reductase] + O2 = 3beta,16alpha-dihydroxy-androst-5-en-17-one + acetate + oxidized [NADPH--hemoprotein reductase] + H2O + 2 H(+)</text>
        <dbReference type="Rhea" id="RHEA:53224"/>
        <dbReference type="Rhea" id="RHEA-COMP:11964"/>
        <dbReference type="Rhea" id="RHEA-COMP:11965"/>
        <dbReference type="ChEBI" id="CHEBI:15377"/>
        <dbReference type="ChEBI" id="CHEBI:15378"/>
        <dbReference type="ChEBI" id="CHEBI:15379"/>
        <dbReference type="ChEBI" id="CHEBI:27771"/>
        <dbReference type="ChEBI" id="CHEBI:30089"/>
        <dbReference type="ChEBI" id="CHEBI:57618"/>
        <dbReference type="ChEBI" id="CHEBI:58210"/>
        <dbReference type="ChEBI" id="CHEBI:137049"/>
    </reaction>
    <physiologicalReaction direction="left-to-right" evidence="2">
        <dbReference type="Rhea" id="RHEA:53225"/>
    </physiologicalReaction>
</comment>
<comment type="catalytic activity">
    <reaction evidence="2">
        <text>3beta-hydroxyandrost-5-en-17-one + reduced [NADPH--hemoprotein reductase] + O2 = 3beta,16alpha-dihydroxy-androst-5-en-17-one + oxidized [NADPH--hemoprotein reductase] + H2O + H(+)</text>
        <dbReference type="Rhea" id="RHEA:47220"/>
        <dbReference type="Rhea" id="RHEA-COMP:11964"/>
        <dbReference type="Rhea" id="RHEA-COMP:11965"/>
        <dbReference type="ChEBI" id="CHEBI:15377"/>
        <dbReference type="ChEBI" id="CHEBI:15378"/>
        <dbReference type="ChEBI" id="CHEBI:15379"/>
        <dbReference type="ChEBI" id="CHEBI:27771"/>
        <dbReference type="ChEBI" id="CHEBI:28689"/>
        <dbReference type="ChEBI" id="CHEBI:57618"/>
        <dbReference type="ChEBI" id="CHEBI:58210"/>
    </reaction>
    <physiologicalReaction direction="left-to-right" evidence="2">
        <dbReference type="Rhea" id="RHEA:47221"/>
    </physiologicalReaction>
</comment>
<comment type="catalytic activity">
    <reaction evidence="2">
        <text>androst-4-ene-3,17-dione + reduced [NADPH--hemoprotein reductase] + O2 = 16alpha-hydroxyandrost-4-ene-3,17-dione + oxidized [NADPH--hemoprotein reductase] + H2O + H(+)</text>
        <dbReference type="Rhea" id="RHEA:53228"/>
        <dbReference type="Rhea" id="RHEA-COMP:11964"/>
        <dbReference type="Rhea" id="RHEA-COMP:11965"/>
        <dbReference type="ChEBI" id="CHEBI:15377"/>
        <dbReference type="ChEBI" id="CHEBI:15378"/>
        <dbReference type="ChEBI" id="CHEBI:15379"/>
        <dbReference type="ChEBI" id="CHEBI:16422"/>
        <dbReference type="ChEBI" id="CHEBI:27582"/>
        <dbReference type="ChEBI" id="CHEBI:57618"/>
        <dbReference type="ChEBI" id="CHEBI:58210"/>
    </reaction>
    <physiologicalReaction direction="left-to-right" evidence="2">
        <dbReference type="Rhea" id="RHEA:53229"/>
    </physiologicalReaction>
</comment>
<comment type="cofactor">
    <cofactor evidence="2">
        <name>heme</name>
        <dbReference type="ChEBI" id="CHEBI:30413"/>
    </cofactor>
</comment>
<comment type="activity regulation">
    <text evidence="2">Regulated predominantly by intracellular cAMP levels. The 17,20-lyase activity is stimulated by cytochrome b5, which acts as an allosteric effector increasing the Vmax of the lyase activity.</text>
</comment>
<comment type="pathway">
    <text evidence="2">Steroid hormone biosynthesis.</text>
</comment>
<comment type="pathway">
    <text evidence="2">Steroid biosynthesis; glucocorticoid biosynthesis.</text>
</comment>
<comment type="subcellular location">
    <subcellularLocation>
        <location evidence="2">Endoplasmic reticulum membrane</location>
    </subcellularLocation>
    <subcellularLocation>
        <location evidence="2">Microsome membrane</location>
    </subcellularLocation>
</comment>
<comment type="similarity">
    <text evidence="3">Belongs to the cytochrome P450 family.</text>
</comment>
<name>CP17A_FELCA</name>
<reference key="1">
    <citation type="submission" date="2000-08" db="EMBL/GenBank/DDBJ databases">
        <title>Cloning and heterologous expression of the cDNA encoding the cytochrome P450 steroid 17alpha-hydroxylase/17,20 lyase from cat.</title>
        <authorList>
            <person name="Gilep A.A."/>
            <person name="Huryeva I.V."/>
            <person name="Guryev O.L."/>
            <person name="Usanov S.A."/>
            <person name="Estabrook R.W."/>
        </authorList>
    </citation>
    <scope>NUCLEOTIDE SEQUENCE [MRNA]</scope>
    <source>
        <tissue>Adrenal gland</tissue>
    </source>
</reference>
<keyword id="KW-0256">Endoplasmic reticulum</keyword>
<keyword id="KW-0349">Heme</keyword>
<keyword id="KW-0408">Iron</keyword>
<keyword id="KW-0443">Lipid metabolism</keyword>
<keyword id="KW-0456">Lyase</keyword>
<keyword id="KW-0472">Membrane</keyword>
<keyword id="KW-0479">Metal-binding</keyword>
<keyword id="KW-0492">Microsome</keyword>
<keyword id="KW-0503">Monooxygenase</keyword>
<keyword id="KW-0560">Oxidoreductase</keyword>
<keyword id="KW-1185">Reference proteome</keyword>
<keyword id="KW-0755">Steroidogenesis</keyword>
<feature type="chain" id="PRO_0000051929" description="Steroid 17-alpha-hydroxylase/17,20 lyase">
    <location>
        <begin position="1"/>
        <end position="508"/>
    </location>
</feature>
<feature type="binding site" evidence="2">
    <location>
        <position position="202"/>
    </location>
    <ligand>
        <name>substrate</name>
    </ligand>
</feature>
<feature type="binding site" description="axial binding residue" evidence="1">
    <location>
        <position position="442"/>
    </location>
    <ligand>
        <name>heme</name>
        <dbReference type="ChEBI" id="CHEBI:30413"/>
    </ligand>
    <ligandPart>
        <name>Fe</name>
        <dbReference type="ChEBI" id="CHEBI:18248"/>
    </ligandPart>
</feature>
<accession>Q9GMC8</accession>
<organism>
    <name type="scientific">Felis catus</name>
    <name type="common">Cat</name>
    <name type="synonym">Felis silvestris catus</name>
    <dbReference type="NCBI Taxonomy" id="9685"/>
    <lineage>
        <taxon>Eukaryota</taxon>
        <taxon>Metazoa</taxon>
        <taxon>Chordata</taxon>
        <taxon>Craniata</taxon>
        <taxon>Vertebrata</taxon>
        <taxon>Euteleostomi</taxon>
        <taxon>Mammalia</taxon>
        <taxon>Eutheria</taxon>
        <taxon>Laurasiatheria</taxon>
        <taxon>Carnivora</taxon>
        <taxon>Feliformia</taxon>
        <taxon>Felidae</taxon>
        <taxon>Felinae</taxon>
        <taxon>Felis</taxon>
    </lineage>
</organism>
<evidence type="ECO:0000250" key="1"/>
<evidence type="ECO:0000250" key="2">
    <source>
        <dbReference type="UniProtKB" id="P05093"/>
    </source>
</evidence>
<evidence type="ECO:0000305" key="3"/>
<gene>
    <name type="primary">CYP17A1</name>
    <name type="synonym">CYP17</name>
</gene>
<sequence>MWELLVFLLFAVAYFLWPKAKCPGAKYPKSLPSLPLVGSLLFLPRSGHPHKNFFKLQKKYGPIYSFRLGTKTTVMVGDHQLAKEVLVKKGKEFSGRPHVVTLDILSDNQKGIAFADHGASWQMHRKLALATFALFKDGDQRLEKIICREISLLCDNLAMQDGQSIDLYLPLFLAVTNIICLICFNSSFKNGDPALKIIQNYNEGILKTLGKDNLVDIFPVLKIFPNKTLEKMKNYVKNRDELLREILEKHKENFSNDSITNMLDVLIQARMNSDNNGAASDQDSKLLSDKHILTTIGDIFGAGVETTTSVVRWTVAFLLHHPQLYKKLQEEIDQNIGFSRTPTMSDRNQLILLEATIREVLRIRPVAPTLIPHKAIMDSSIGEFAVDKGTNVIINLWALHHNEKEWYRPDQFMPERFLDPTRSQLISPSLSYLPFGAGPRSCLGESLARQEVFLFMAWLLQRFDLEVPDDGQLPHLEGNPTVVFLIAPFKVKVKVRQAWREAQAEGST</sequence>
<dbReference type="EC" id="1.14.14.19" evidence="2"/>
<dbReference type="EC" id="1.14.14.32" evidence="2"/>
<dbReference type="EMBL" id="AF292564">
    <property type="protein sequence ID" value="AAG02226.1"/>
    <property type="molecule type" value="mRNA"/>
</dbReference>
<dbReference type="RefSeq" id="NP_001009371.1">
    <property type="nucleotide sequence ID" value="NM_001009371.2"/>
</dbReference>
<dbReference type="SMR" id="Q9GMC8"/>
<dbReference type="STRING" id="9685.ENSFCAP00000001165"/>
<dbReference type="PaxDb" id="9685-ENSFCAP00000001165"/>
<dbReference type="GeneID" id="493967"/>
<dbReference type="KEGG" id="fca:493967"/>
<dbReference type="CTD" id="1586"/>
<dbReference type="eggNOG" id="KOG0156">
    <property type="taxonomic scope" value="Eukaryota"/>
</dbReference>
<dbReference type="InParanoid" id="Q9GMC8"/>
<dbReference type="OrthoDB" id="1470350at2759"/>
<dbReference type="UniPathway" id="UPA00788"/>
<dbReference type="Proteomes" id="UP000011712">
    <property type="component" value="Unplaced"/>
</dbReference>
<dbReference type="GO" id="GO:0005789">
    <property type="term" value="C:endoplasmic reticulum membrane"/>
    <property type="evidence" value="ECO:0007669"/>
    <property type="project" value="UniProtKB-SubCell"/>
</dbReference>
<dbReference type="GO" id="GO:0020037">
    <property type="term" value="F:heme binding"/>
    <property type="evidence" value="ECO:0000250"/>
    <property type="project" value="UniProtKB"/>
</dbReference>
<dbReference type="GO" id="GO:0005506">
    <property type="term" value="F:iron ion binding"/>
    <property type="evidence" value="ECO:0007669"/>
    <property type="project" value="InterPro"/>
</dbReference>
<dbReference type="GO" id="GO:0016829">
    <property type="term" value="F:lyase activity"/>
    <property type="evidence" value="ECO:0007669"/>
    <property type="project" value="UniProtKB-KW"/>
</dbReference>
<dbReference type="GO" id="GO:0004508">
    <property type="term" value="F:steroid 17-alpha-monooxygenase activity"/>
    <property type="evidence" value="ECO:0000250"/>
    <property type="project" value="UniProtKB"/>
</dbReference>
<dbReference type="GO" id="GO:0006704">
    <property type="term" value="P:glucocorticoid biosynthetic process"/>
    <property type="evidence" value="ECO:0007669"/>
    <property type="project" value="UniProtKB-UniPathway"/>
</dbReference>
<dbReference type="GO" id="GO:0042446">
    <property type="term" value="P:hormone biosynthetic process"/>
    <property type="evidence" value="ECO:0000250"/>
    <property type="project" value="UniProtKB"/>
</dbReference>
<dbReference type="GO" id="GO:0042448">
    <property type="term" value="P:progesterone metabolic process"/>
    <property type="evidence" value="ECO:0000250"/>
    <property type="project" value="UniProtKB"/>
</dbReference>
<dbReference type="GO" id="GO:0008202">
    <property type="term" value="P:steroid metabolic process"/>
    <property type="evidence" value="ECO:0000250"/>
    <property type="project" value="UniProtKB"/>
</dbReference>
<dbReference type="CDD" id="cd20673">
    <property type="entry name" value="CYP17A1"/>
    <property type="match status" value="1"/>
</dbReference>
<dbReference type="FunFam" id="1.10.630.10:FF:000002">
    <property type="entry name" value="Cytochrome P450 1A1"/>
    <property type="match status" value="1"/>
</dbReference>
<dbReference type="Gene3D" id="1.10.630.10">
    <property type="entry name" value="Cytochrome P450"/>
    <property type="match status" value="1"/>
</dbReference>
<dbReference type="InterPro" id="IPR001128">
    <property type="entry name" value="Cyt_P450"/>
</dbReference>
<dbReference type="InterPro" id="IPR017972">
    <property type="entry name" value="Cyt_P450_CS"/>
</dbReference>
<dbReference type="InterPro" id="IPR002401">
    <property type="entry name" value="Cyt_P450_E_grp-I"/>
</dbReference>
<dbReference type="InterPro" id="IPR036396">
    <property type="entry name" value="Cyt_P450_sf"/>
</dbReference>
<dbReference type="PANTHER" id="PTHR24289">
    <property type="entry name" value="STEROID 17-ALPHA-HYDROXYLASE/17,20 LYASE"/>
    <property type="match status" value="1"/>
</dbReference>
<dbReference type="PANTHER" id="PTHR24289:SF13">
    <property type="entry name" value="STEROID 17-ALPHA-HYDROXYLASE_17,20 LYASE"/>
    <property type="match status" value="1"/>
</dbReference>
<dbReference type="Pfam" id="PF00067">
    <property type="entry name" value="p450"/>
    <property type="match status" value="1"/>
</dbReference>
<dbReference type="PRINTS" id="PR00463">
    <property type="entry name" value="EP450I"/>
</dbReference>
<dbReference type="PRINTS" id="PR00385">
    <property type="entry name" value="P450"/>
</dbReference>
<dbReference type="SUPFAM" id="SSF48264">
    <property type="entry name" value="Cytochrome P450"/>
    <property type="match status" value="1"/>
</dbReference>
<dbReference type="PROSITE" id="PS00086">
    <property type="entry name" value="CYTOCHROME_P450"/>
    <property type="match status" value="1"/>
</dbReference>
<protein>
    <recommendedName>
        <fullName>Steroid 17-alpha-hydroxylase/17,20 lyase</fullName>
        <ecNumber evidence="2">1.14.14.19</ecNumber>
    </recommendedName>
    <alternativeName>
        <fullName>17-alpha-hydroxyprogesterone aldolase</fullName>
        <ecNumber evidence="2">1.14.14.32</ecNumber>
    </alternativeName>
    <alternativeName>
        <fullName>CYPXVII</fullName>
    </alternativeName>
    <alternativeName>
        <fullName>Cytochrome P450 17A1</fullName>
    </alternativeName>
    <alternativeName>
        <fullName>Cytochrome P450-C17</fullName>
        <shortName>Cytochrome P450c17</shortName>
    </alternativeName>
    <alternativeName>
        <fullName>Steroid 17-alpha-monooxygenase</fullName>
    </alternativeName>
</protein>
<proteinExistence type="evidence at transcript level"/>